<dbReference type="EC" id="2.4.2.7" evidence="1"/>
<dbReference type="EMBL" id="CP000384">
    <property type="protein sequence ID" value="ABG08387.1"/>
    <property type="molecule type" value="Genomic_DNA"/>
</dbReference>
<dbReference type="SMR" id="Q1B9P7"/>
<dbReference type="KEGG" id="mmc:Mmcs_2279"/>
<dbReference type="HOGENOM" id="CLU_063339_3_3_11"/>
<dbReference type="BioCyc" id="MSP164756:G1G6O-2331-MONOMER"/>
<dbReference type="UniPathway" id="UPA00588">
    <property type="reaction ID" value="UER00646"/>
</dbReference>
<dbReference type="GO" id="GO:0005737">
    <property type="term" value="C:cytoplasm"/>
    <property type="evidence" value="ECO:0007669"/>
    <property type="project" value="UniProtKB-SubCell"/>
</dbReference>
<dbReference type="GO" id="GO:0002055">
    <property type="term" value="F:adenine binding"/>
    <property type="evidence" value="ECO:0007669"/>
    <property type="project" value="TreeGrafter"/>
</dbReference>
<dbReference type="GO" id="GO:0003999">
    <property type="term" value="F:adenine phosphoribosyltransferase activity"/>
    <property type="evidence" value="ECO:0007669"/>
    <property type="project" value="UniProtKB-UniRule"/>
</dbReference>
<dbReference type="GO" id="GO:0016208">
    <property type="term" value="F:AMP binding"/>
    <property type="evidence" value="ECO:0007669"/>
    <property type="project" value="TreeGrafter"/>
</dbReference>
<dbReference type="GO" id="GO:0006168">
    <property type="term" value="P:adenine salvage"/>
    <property type="evidence" value="ECO:0007669"/>
    <property type="project" value="InterPro"/>
</dbReference>
<dbReference type="GO" id="GO:0044209">
    <property type="term" value="P:AMP salvage"/>
    <property type="evidence" value="ECO:0007669"/>
    <property type="project" value="UniProtKB-UniRule"/>
</dbReference>
<dbReference type="GO" id="GO:0006166">
    <property type="term" value="P:purine ribonucleoside salvage"/>
    <property type="evidence" value="ECO:0007669"/>
    <property type="project" value="UniProtKB-KW"/>
</dbReference>
<dbReference type="CDD" id="cd06223">
    <property type="entry name" value="PRTases_typeI"/>
    <property type="match status" value="1"/>
</dbReference>
<dbReference type="FunFam" id="3.40.50.2020:FF:000021">
    <property type="entry name" value="Adenine phosphoribosyltransferase"/>
    <property type="match status" value="1"/>
</dbReference>
<dbReference type="Gene3D" id="3.40.50.2020">
    <property type="match status" value="1"/>
</dbReference>
<dbReference type="HAMAP" id="MF_00004">
    <property type="entry name" value="Aden_phosphoribosyltr"/>
    <property type="match status" value="1"/>
</dbReference>
<dbReference type="InterPro" id="IPR005764">
    <property type="entry name" value="Ade_phspho_trans"/>
</dbReference>
<dbReference type="InterPro" id="IPR000836">
    <property type="entry name" value="PRibTrfase_dom"/>
</dbReference>
<dbReference type="InterPro" id="IPR029057">
    <property type="entry name" value="PRTase-like"/>
</dbReference>
<dbReference type="InterPro" id="IPR050054">
    <property type="entry name" value="UPRTase/APRTase"/>
</dbReference>
<dbReference type="NCBIfam" id="NF002634">
    <property type="entry name" value="PRK02304.1-3"/>
    <property type="match status" value="1"/>
</dbReference>
<dbReference type="NCBIfam" id="NF002636">
    <property type="entry name" value="PRK02304.1-5"/>
    <property type="match status" value="1"/>
</dbReference>
<dbReference type="PANTHER" id="PTHR32315">
    <property type="entry name" value="ADENINE PHOSPHORIBOSYLTRANSFERASE"/>
    <property type="match status" value="1"/>
</dbReference>
<dbReference type="PANTHER" id="PTHR32315:SF3">
    <property type="entry name" value="ADENINE PHOSPHORIBOSYLTRANSFERASE"/>
    <property type="match status" value="1"/>
</dbReference>
<dbReference type="Pfam" id="PF00156">
    <property type="entry name" value="Pribosyltran"/>
    <property type="match status" value="1"/>
</dbReference>
<dbReference type="SUPFAM" id="SSF53271">
    <property type="entry name" value="PRTase-like"/>
    <property type="match status" value="1"/>
</dbReference>
<dbReference type="PROSITE" id="PS00103">
    <property type="entry name" value="PUR_PYR_PR_TRANSFER"/>
    <property type="match status" value="1"/>
</dbReference>
<name>APT_MYCSS</name>
<keyword id="KW-0963">Cytoplasm</keyword>
<keyword id="KW-0328">Glycosyltransferase</keyword>
<keyword id="KW-0660">Purine salvage</keyword>
<keyword id="KW-0808">Transferase</keyword>
<evidence type="ECO:0000255" key="1">
    <source>
        <dbReference type="HAMAP-Rule" id="MF_00004"/>
    </source>
</evidence>
<accession>Q1B9P7</accession>
<proteinExistence type="inferred from homology"/>
<feature type="chain" id="PRO_0000329360" description="Adenine phosphoribosyltransferase">
    <location>
        <begin position="1"/>
        <end position="174"/>
    </location>
</feature>
<comment type="function">
    <text evidence="1">Catalyzes a salvage reaction resulting in the formation of AMP, that is energically less costly than de novo synthesis.</text>
</comment>
<comment type="catalytic activity">
    <reaction evidence="1">
        <text>AMP + diphosphate = 5-phospho-alpha-D-ribose 1-diphosphate + adenine</text>
        <dbReference type="Rhea" id="RHEA:16609"/>
        <dbReference type="ChEBI" id="CHEBI:16708"/>
        <dbReference type="ChEBI" id="CHEBI:33019"/>
        <dbReference type="ChEBI" id="CHEBI:58017"/>
        <dbReference type="ChEBI" id="CHEBI:456215"/>
        <dbReference type="EC" id="2.4.2.7"/>
    </reaction>
</comment>
<comment type="pathway">
    <text evidence="1">Purine metabolism; AMP biosynthesis via salvage pathway; AMP from adenine: step 1/1.</text>
</comment>
<comment type="subunit">
    <text evidence="1">Homodimer.</text>
</comment>
<comment type="subcellular location">
    <subcellularLocation>
        <location evidence="1">Cytoplasm</location>
    </subcellularLocation>
</comment>
<comment type="similarity">
    <text evidence="1">Belongs to the purine/pyrimidine phosphoribosyltransferase family.</text>
</comment>
<sequence length="174" mass="17709">MTDISKVIASLMREVPDFPEPGIQFKDLTPLLADAEGLMAVTDALAATAEGADLVAGIDARGFLLGAAVALRLGTGVLAVRKGGKLPPPVHSQTYNLEYGSATLEIPADGLDIAGRSVVIIDDVLATGGTVAATHRLLTSGGATVLHAAVVLELTALGGREVVQPLSVSSLYTV</sequence>
<gene>
    <name evidence="1" type="primary">apt</name>
    <name type="ordered locus">Mmcs_2279</name>
</gene>
<reference key="1">
    <citation type="submission" date="2006-06" db="EMBL/GenBank/DDBJ databases">
        <title>Complete sequence of chromosome of Mycobacterium sp. MCS.</title>
        <authorList>
            <consortium name="US DOE Joint Genome Institute"/>
            <person name="Copeland A."/>
            <person name="Lucas S."/>
            <person name="Lapidus A."/>
            <person name="Barry K."/>
            <person name="Detter J.C."/>
            <person name="Glavina del Rio T."/>
            <person name="Hammon N."/>
            <person name="Israni S."/>
            <person name="Dalin E."/>
            <person name="Tice H."/>
            <person name="Pitluck S."/>
            <person name="Martinez M."/>
            <person name="Schmutz J."/>
            <person name="Larimer F."/>
            <person name="Land M."/>
            <person name="Hauser L."/>
            <person name="Kyrpides N."/>
            <person name="Kim E."/>
            <person name="Miller C.D."/>
            <person name="Hughes J.E."/>
            <person name="Anderson A.J."/>
            <person name="Sims R.C."/>
            <person name="Richardson P."/>
        </authorList>
    </citation>
    <scope>NUCLEOTIDE SEQUENCE [LARGE SCALE GENOMIC DNA]</scope>
    <source>
        <strain>MCS</strain>
    </source>
</reference>
<protein>
    <recommendedName>
        <fullName evidence="1">Adenine phosphoribosyltransferase</fullName>
        <shortName evidence="1">APRT</shortName>
        <ecNumber evidence="1">2.4.2.7</ecNumber>
    </recommendedName>
</protein>
<organism>
    <name type="scientific">Mycobacterium sp. (strain MCS)</name>
    <dbReference type="NCBI Taxonomy" id="164756"/>
    <lineage>
        <taxon>Bacteria</taxon>
        <taxon>Bacillati</taxon>
        <taxon>Actinomycetota</taxon>
        <taxon>Actinomycetes</taxon>
        <taxon>Mycobacteriales</taxon>
        <taxon>Mycobacteriaceae</taxon>
        <taxon>Mycobacterium</taxon>
    </lineage>
</organism>